<reference key="1">
    <citation type="journal article" date="2007" name="Proc. Natl. Acad. Sci. U.S.A.">
        <title>Deep-sea vent epsilon-proteobacterial genomes provide insights into emergence of pathogens.</title>
        <authorList>
            <person name="Nakagawa S."/>
            <person name="Takaki Y."/>
            <person name="Shimamura S."/>
            <person name="Reysenbach A.-L."/>
            <person name="Takai K."/>
            <person name="Horikoshi K."/>
        </authorList>
    </citation>
    <scope>NUCLEOTIDE SEQUENCE [LARGE SCALE GENOMIC DNA]</scope>
    <source>
        <strain>SB155-2</strain>
    </source>
</reference>
<comment type="function">
    <text evidence="1">Catalyzes the conversion of dethiobiotin (DTB) to biotin by the insertion of a sulfur atom into dethiobiotin via a radical-based mechanism.</text>
</comment>
<comment type="catalytic activity">
    <reaction evidence="1">
        <text>(4R,5S)-dethiobiotin + (sulfur carrier)-SH + 2 reduced [2Fe-2S]-[ferredoxin] + 2 S-adenosyl-L-methionine = (sulfur carrier)-H + biotin + 2 5'-deoxyadenosine + 2 L-methionine + 2 oxidized [2Fe-2S]-[ferredoxin]</text>
        <dbReference type="Rhea" id="RHEA:22060"/>
        <dbReference type="Rhea" id="RHEA-COMP:10000"/>
        <dbReference type="Rhea" id="RHEA-COMP:10001"/>
        <dbReference type="Rhea" id="RHEA-COMP:14737"/>
        <dbReference type="Rhea" id="RHEA-COMP:14739"/>
        <dbReference type="ChEBI" id="CHEBI:17319"/>
        <dbReference type="ChEBI" id="CHEBI:29917"/>
        <dbReference type="ChEBI" id="CHEBI:33737"/>
        <dbReference type="ChEBI" id="CHEBI:33738"/>
        <dbReference type="ChEBI" id="CHEBI:57586"/>
        <dbReference type="ChEBI" id="CHEBI:57844"/>
        <dbReference type="ChEBI" id="CHEBI:59789"/>
        <dbReference type="ChEBI" id="CHEBI:64428"/>
        <dbReference type="ChEBI" id="CHEBI:149473"/>
        <dbReference type="EC" id="2.8.1.6"/>
    </reaction>
</comment>
<comment type="cofactor">
    <cofactor evidence="1">
        <name>[4Fe-4S] cluster</name>
        <dbReference type="ChEBI" id="CHEBI:49883"/>
    </cofactor>
    <text evidence="1">Binds 1 [4Fe-4S] cluster. The cluster is coordinated with 3 cysteines and an exchangeable S-adenosyl-L-methionine.</text>
</comment>
<comment type="cofactor">
    <cofactor evidence="1">
        <name>[2Fe-2S] cluster</name>
        <dbReference type="ChEBI" id="CHEBI:190135"/>
    </cofactor>
    <text evidence="1">Binds 1 [2Fe-2S] cluster. The cluster is coordinated with 3 cysteines and 1 arginine.</text>
</comment>
<comment type="pathway">
    <text evidence="1">Cofactor biosynthesis; biotin biosynthesis; biotin from 7,8-diaminononanoate: step 2/2.</text>
</comment>
<comment type="subunit">
    <text evidence="1">Homodimer.</text>
</comment>
<comment type="similarity">
    <text evidence="1">Belongs to the radical SAM superfamily. Biotin synthase family.</text>
</comment>
<gene>
    <name evidence="1" type="primary">bioB</name>
    <name type="ordered locus">NIS_1653</name>
</gene>
<keyword id="KW-0001">2Fe-2S</keyword>
<keyword id="KW-0004">4Fe-4S</keyword>
<keyword id="KW-0093">Biotin biosynthesis</keyword>
<keyword id="KW-0408">Iron</keyword>
<keyword id="KW-0411">Iron-sulfur</keyword>
<keyword id="KW-0479">Metal-binding</keyword>
<keyword id="KW-1185">Reference proteome</keyword>
<keyword id="KW-0949">S-adenosyl-L-methionine</keyword>
<keyword id="KW-0808">Transferase</keyword>
<evidence type="ECO:0000255" key="1">
    <source>
        <dbReference type="HAMAP-Rule" id="MF_01694"/>
    </source>
</evidence>
<evidence type="ECO:0000255" key="2">
    <source>
        <dbReference type="PROSITE-ProRule" id="PRU01266"/>
    </source>
</evidence>
<organism>
    <name type="scientific">Nitratiruptor sp. (strain SB155-2)</name>
    <dbReference type="NCBI Taxonomy" id="387092"/>
    <lineage>
        <taxon>Bacteria</taxon>
        <taxon>Pseudomonadati</taxon>
        <taxon>Campylobacterota</taxon>
        <taxon>Epsilonproteobacteria</taxon>
        <taxon>Nautiliales</taxon>
        <taxon>Nitratiruptoraceae</taxon>
        <taxon>Nitratiruptor</taxon>
    </lineage>
</organism>
<dbReference type="EC" id="2.8.1.6" evidence="1"/>
<dbReference type="EMBL" id="AP009178">
    <property type="protein sequence ID" value="BAF70759.1"/>
    <property type="molecule type" value="Genomic_DNA"/>
</dbReference>
<dbReference type="RefSeq" id="WP_012083022.1">
    <property type="nucleotide sequence ID" value="NC_009662.1"/>
</dbReference>
<dbReference type="SMR" id="A6Q5K0"/>
<dbReference type="FunCoup" id="A6Q5K0">
    <property type="interactions" value="315"/>
</dbReference>
<dbReference type="STRING" id="387092.NIS_1653"/>
<dbReference type="KEGG" id="nis:NIS_1653"/>
<dbReference type="eggNOG" id="COG0502">
    <property type="taxonomic scope" value="Bacteria"/>
</dbReference>
<dbReference type="HOGENOM" id="CLU_033172_2_1_7"/>
<dbReference type="InParanoid" id="A6Q5K0"/>
<dbReference type="OrthoDB" id="9786826at2"/>
<dbReference type="UniPathway" id="UPA00078">
    <property type="reaction ID" value="UER00162"/>
</dbReference>
<dbReference type="Proteomes" id="UP000001118">
    <property type="component" value="Chromosome"/>
</dbReference>
<dbReference type="GO" id="GO:0051537">
    <property type="term" value="F:2 iron, 2 sulfur cluster binding"/>
    <property type="evidence" value="ECO:0007669"/>
    <property type="project" value="UniProtKB-KW"/>
</dbReference>
<dbReference type="GO" id="GO:0051539">
    <property type="term" value="F:4 iron, 4 sulfur cluster binding"/>
    <property type="evidence" value="ECO:0007669"/>
    <property type="project" value="UniProtKB-KW"/>
</dbReference>
<dbReference type="GO" id="GO:0004076">
    <property type="term" value="F:biotin synthase activity"/>
    <property type="evidence" value="ECO:0007669"/>
    <property type="project" value="UniProtKB-UniRule"/>
</dbReference>
<dbReference type="GO" id="GO:0005506">
    <property type="term" value="F:iron ion binding"/>
    <property type="evidence" value="ECO:0007669"/>
    <property type="project" value="UniProtKB-UniRule"/>
</dbReference>
<dbReference type="GO" id="GO:0009102">
    <property type="term" value="P:biotin biosynthetic process"/>
    <property type="evidence" value="ECO:0007669"/>
    <property type="project" value="UniProtKB-UniRule"/>
</dbReference>
<dbReference type="CDD" id="cd01335">
    <property type="entry name" value="Radical_SAM"/>
    <property type="match status" value="1"/>
</dbReference>
<dbReference type="Gene3D" id="3.20.20.70">
    <property type="entry name" value="Aldolase class I"/>
    <property type="match status" value="1"/>
</dbReference>
<dbReference type="HAMAP" id="MF_01694">
    <property type="entry name" value="BioB"/>
    <property type="match status" value="1"/>
</dbReference>
<dbReference type="InterPro" id="IPR013785">
    <property type="entry name" value="Aldolase_TIM"/>
</dbReference>
<dbReference type="InterPro" id="IPR010722">
    <property type="entry name" value="BATS_dom"/>
</dbReference>
<dbReference type="InterPro" id="IPR002684">
    <property type="entry name" value="Biotin_synth/BioAB"/>
</dbReference>
<dbReference type="InterPro" id="IPR024177">
    <property type="entry name" value="Biotin_synthase"/>
</dbReference>
<dbReference type="InterPro" id="IPR006638">
    <property type="entry name" value="Elp3/MiaA/NifB-like_rSAM"/>
</dbReference>
<dbReference type="InterPro" id="IPR007197">
    <property type="entry name" value="rSAM"/>
</dbReference>
<dbReference type="NCBIfam" id="TIGR00433">
    <property type="entry name" value="bioB"/>
    <property type="match status" value="1"/>
</dbReference>
<dbReference type="NCBIfam" id="NF006308">
    <property type="entry name" value="PRK08508.1"/>
    <property type="match status" value="1"/>
</dbReference>
<dbReference type="PANTHER" id="PTHR22976">
    <property type="entry name" value="BIOTIN SYNTHASE"/>
    <property type="match status" value="1"/>
</dbReference>
<dbReference type="PANTHER" id="PTHR22976:SF2">
    <property type="entry name" value="BIOTIN SYNTHASE, MITOCHONDRIAL"/>
    <property type="match status" value="1"/>
</dbReference>
<dbReference type="Pfam" id="PF06968">
    <property type="entry name" value="BATS"/>
    <property type="match status" value="1"/>
</dbReference>
<dbReference type="Pfam" id="PF04055">
    <property type="entry name" value="Radical_SAM"/>
    <property type="match status" value="1"/>
</dbReference>
<dbReference type="PIRSF" id="PIRSF001619">
    <property type="entry name" value="Biotin_synth"/>
    <property type="match status" value="1"/>
</dbReference>
<dbReference type="SFLD" id="SFLDG01278">
    <property type="entry name" value="biotin_synthase_like"/>
    <property type="match status" value="1"/>
</dbReference>
<dbReference type="SFLD" id="SFLDS00029">
    <property type="entry name" value="Radical_SAM"/>
    <property type="match status" value="1"/>
</dbReference>
<dbReference type="SMART" id="SM00876">
    <property type="entry name" value="BATS"/>
    <property type="match status" value="1"/>
</dbReference>
<dbReference type="SMART" id="SM00729">
    <property type="entry name" value="Elp3"/>
    <property type="match status" value="1"/>
</dbReference>
<dbReference type="SUPFAM" id="SSF102114">
    <property type="entry name" value="Radical SAM enzymes"/>
    <property type="match status" value="1"/>
</dbReference>
<dbReference type="PROSITE" id="PS51918">
    <property type="entry name" value="RADICAL_SAM"/>
    <property type="match status" value="1"/>
</dbReference>
<feature type="chain" id="PRO_0000381506" description="Biotin synthase">
    <location>
        <begin position="1"/>
        <end position="279"/>
    </location>
</feature>
<feature type="domain" description="Radical SAM core" evidence="2">
    <location>
        <begin position="1"/>
        <end position="227"/>
    </location>
</feature>
<feature type="binding site" evidence="1">
    <location>
        <position position="16"/>
    </location>
    <ligand>
        <name>[4Fe-4S] cluster</name>
        <dbReference type="ChEBI" id="CHEBI:49883"/>
        <note>4Fe-4S-S-AdoMet</note>
    </ligand>
</feature>
<feature type="binding site" evidence="1">
    <location>
        <position position="20"/>
    </location>
    <ligand>
        <name>[4Fe-4S] cluster</name>
        <dbReference type="ChEBI" id="CHEBI:49883"/>
        <note>4Fe-4S-S-AdoMet</note>
    </ligand>
</feature>
<feature type="binding site" evidence="1">
    <location>
        <position position="23"/>
    </location>
    <ligand>
        <name>[4Fe-4S] cluster</name>
        <dbReference type="ChEBI" id="CHEBI:49883"/>
        <note>4Fe-4S-S-AdoMet</note>
    </ligand>
</feature>
<feature type="binding site" evidence="1">
    <location>
        <position position="60"/>
    </location>
    <ligand>
        <name>[2Fe-2S] cluster</name>
        <dbReference type="ChEBI" id="CHEBI:190135"/>
    </ligand>
</feature>
<feature type="binding site" evidence="1">
    <location>
        <position position="95"/>
    </location>
    <ligand>
        <name>[2Fe-2S] cluster</name>
        <dbReference type="ChEBI" id="CHEBI:190135"/>
    </ligand>
</feature>
<feature type="binding site" evidence="1">
    <location>
        <position position="153"/>
    </location>
    <ligand>
        <name>[2Fe-2S] cluster</name>
        <dbReference type="ChEBI" id="CHEBI:190135"/>
    </ligand>
</feature>
<accession>A6Q5K0</accession>
<protein>
    <recommendedName>
        <fullName evidence="1">Biotin synthase</fullName>
        <ecNumber evidence="1">2.8.1.6</ecNumber>
    </recommendedName>
</protein>
<sequence length="279" mass="30844">MKVYLCAISNISSGVCAEDCKFCTQSTKYRADIPRYKYKSIETIVEEAKKAKAAKAIGFCLVTAGKGIDDKILDFVTQAARAVKKEVPDISLIGCNGTAEVWQLKELKHAGIDNYNHNLETAKSFYEQICSTHSWEERYQTCLNAKEAGLNLCTGGIFGLGESKEQREEMMDQIASLEPMSVPINFYHPNEALPLPQTTIDPSDALSIIQDMRKRVPNAMIMVAGGRELVFGEQWPKILDAGANAIVIGDYLTTKGERPDKDIQTLQKLGVEIATSCHE</sequence>
<proteinExistence type="inferred from homology"/>
<name>BIOB_NITSB</name>